<proteinExistence type="inferred from homology"/>
<organism>
    <name type="scientific">Brevibacillus brevis (strain 47 / JCM 6285 / NBRC 100599)</name>
    <dbReference type="NCBI Taxonomy" id="358681"/>
    <lineage>
        <taxon>Bacteria</taxon>
        <taxon>Bacillati</taxon>
        <taxon>Bacillota</taxon>
        <taxon>Bacilli</taxon>
        <taxon>Bacillales</taxon>
        <taxon>Paenibacillaceae</taxon>
        <taxon>Brevibacillus</taxon>
    </lineage>
</organism>
<reference key="1">
    <citation type="submission" date="2005-03" db="EMBL/GenBank/DDBJ databases">
        <title>Brevibacillus brevis strain 47, complete genome.</title>
        <authorList>
            <person name="Hosoyama A."/>
            <person name="Yamada R."/>
            <person name="Hongo Y."/>
            <person name="Terui Y."/>
            <person name="Ankai A."/>
            <person name="Masuyama W."/>
            <person name="Sekiguchi M."/>
            <person name="Takeda T."/>
            <person name="Asano K."/>
            <person name="Ohji S."/>
            <person name="Ichikawa N."/>
            <person name="Narita S."/>
            <person name="Aoki N."/>
            <person name="Miura H."/>
            <person name="Matsushita S."/>
            <person name="Sekigawa T."/>
            <person name="Yamagata H."/>
            <person name="Yoshikawa H."/>
            <person name="Udaka S."/>
            <person name="Tanikawa S."/>
            <person name="Fujita N."/>
        </authorList>
    </citation>
    <scope>NUCLEOTIDE SEQUENCE [LARGE SCALE GENOMIC DNA]</scope>
    <source>
        <strain>47 / JCM 6285 / NBRC 100599</strain>
    </source>
</reference>
<evidence type="ECO:0000255" key="1">
    <source>
        <dbReference type="HAMAP-Rule" id="MF_01588"/>
    </source>
</evidence>
<name>DNLJ_BREBN</name>
<comment type="function">
    <text evidence="1">DNA ligase that catalyzes the formation of phosphodiester linkages between 5'-phosphoryl and 3'-hydroxyl groups in double-stranded DNA using NAD as a coenzyme and as the energy source for the reaction. It is essential for DNA replication and repair of damaged DNA.</text>
</comment>
<comment type="catalytic activity">
    <reaction evidence="1">
        <text>NAD(+) + (deoxyribonucleotide)n-3'-hydroxyl + 5'-phospho-(deoxyribonucleotide)m = (deoxyribonucleotide)n+m + AMP + beta-nicotinamide D-nucleotide.</text>
        <dbReference type="EC" id="6.5.1.2"/>
    </reaction>
</comment>
<comment type="cofactor">
    <cofactor evidence="1">
        <name>Mg(2+)</name>
        <dbReference type="ChEBI" id="CHEBI:18420"/>
    </cofactor>
    <cofactor evidence="1">
        <name>Mn(2+)</name>
        <dbReference type="ChEBI" id="CHEBI:29035"/>
    </cofactor>
</comment>
<comment type="similarity">
    <text evidence="1">Belongs to the NAD-dependent DNA ligase family. LigA subfamily.</text>
</comment>
<accession>C0Z4D6</accession>
<dbReference type="EC" id="6.5.1.2" evidence="1"/>
<dbReference type="EMBL" id="AP008955">
    <property type="protein sequence ID" value="BAH41663.1"/>
    <property type="molecule type" value="Genomic_DNA"/>
</dbReference>
<dbReference type="RefSeq" id="WP_012684427.1">
    <property type="nucleotide sequence ID" value="NC_012491.1"/>
</dbReference>
<dbReference type="SMR" id="C0Z4D6"/>
<dbReference type="STRING" id="358681.BBR47_06860"/>
<dbReference type="KEGG" id="bbe:BBR47_06860"/>
<dbReference type="eggNOG" id="COG0272">
    <property type="taxonomic scope" value="Bacteria"/>
</dbReference>
<dbReference type="HOGENOM" id="CLU_007764_2_1_9"/>
<dbReference type="Proteomes" id="UP000001877">
    <property type="component" value="Chromosome"/>
</dbReference>
<dbReference type="GO" id="GO:0005829">
    <property type="term" value="C:cytosol"/>
    <property type="evidence" value="ECO:0007669"/>
    <property type="project" value="TreeGrafter"/>
</dbReference>
<dbReference type="GO" id="GO:0003677">
    <property type="term" value="F:DNA binding"/>
    <property type="evidence" value="ECO:0007669"/>
    <property type="project" value="InterPro"/>
</dbReference>
<dbReference type="GO" id="GO:0003911">
    <property type="term" value="F:DNA ligase (NAD+) activity"/>
    <property type="evidence" value="ECO:0007669"/>
    <property type="project" value="UniProtKB-UniRule"/>
</dbReference>
<dbReference type="GO" id="GO:0046872">
    <property type="term" value="F:metal ion binding"/>
    <property type="evidence" value="ECO:0007669"/>
    <property type="project" value="UniProtKB-KW"/>
</dbReference>
<dbReference type="GO" id="GO:0006281">
    <property type="term" value="P:DNA repair"/>
    <property type="evidence" value="ECO:0007669"/>
    <property type="project" value="UniProtKB-KW"/>
</dbReference>
<dbReference type="GO" id="GO:0006260">
    <property type="term" value="P:DNA replication"/>
    <property type="evidence" value="ECO:0007669"/>
    <property type="project" value="UniProtKB-KW"/>
</dbReference>
<dbReference type="CDD" id="cd17748">
    <property type="entry name" value="BRCT_DNA_ligase_like"/>
    <property type="match status" value="1"/>
</dbReference>
<dbReference type="CDD" id="cd00114">
    <property type="entry name" value="LIGANc"/>
    <property type="match status" value="1"/>
</dbReference>
<dbReference type="FunFam" id="1.10.150.20:FF:000006">
    <property type="entry name" value="DNA ligase"/>
    <property type="match status" value="1"/>
</dbReference>
<dbReference type="FunFam" id="1.10.150.20:FF:000007">
    <property type="entry name" value="DNA ligase"/>
    <property type="match status" value="1"/>
</dbReference>
<dbReference type="FunFam" id="1.10.287.610:FF:000002">
    <property type="entry name" value="DNA ligase"/>
    <property type="match status" value="1"/>
</dbReference>
<dbReference type="FunFam" id="2.40.50.140:FF:000012">
    <property type="entry name" value="DNA ligase"/>
    <property type="match status" value="1"/>
</dbReference>
<dbReference type="FunFam" id="3.30.470.30:FF:000001">
    <property type="entry name" value="DNA ligase"/>
    <property type="match status" value="1"/>
</dbReference>
<dbReference type="FunFam" id="6.20.10.30:FF:000002">
    <property type="entry name" value="DNA ligase"/>
    <property type="match status" value="1"/>
</dbReference>
<dbReference type="Gene3D" id="6.20.10.30">
    <property type="match status" value="1"/>
</dbReference>
<dbReference type="Gene3D" id="1.10.150.20">
    <property type="entry name" value="5' to 3' exonuclease, C-terminal subdomain"/>
    <property type="match status" value="2"/>
</dbReference>
<dbReference type="Gene3D" id="3.40.50.10190">
    <property type="entry name" value="BRCT domain"/>
    <property type="match status" value="1"/>
</dbReference>
<dbReference type="Gene3D" id="3.30.470.30">
    <property type="entry name" value="DNA ligase/mRNA capping enzyme"/>
    <property type="match status" value="1"/>
</dbReference>
<dbReference type="Gene3D" id="1.10.287.610">
    <property type="entry name" value="Helix hairpin bin"/>
    <property type="match status" value="1"/>
</dbReference>
<dbReference type="Gene3D" id="2.40.50.140">
    <property type="entry name" value="Nucleic acid-binding proteins"/>
    <property type="match status" value="1"/>
</dbReference>
<dbReference type="HAMAP" id="MF_01588">
    <property type="entry name" value="DNA_ligase_A"/>
    <property type="match status" value="1"/>
</dbReference>
<dbReference type="InterPro" id="IPR001357">
    <property type="entry name" value="BRCT_dom"/>
</dbReference>
<dbReference type="InterPro" id="IPR036420">
    <property type="entry name" value="BRCT_dom_sf"/>
</dbReference>
<dbReference type="InterPro" id="IPR041663">
    <property type="entry name" value="DisA/LigA_HHH"/>
</dbReference>
<dbReference type="InterPro" id="IPR001679">
    <property type="entry name" value="DNA_ligase"/>
</dbReference>
<dbReference type="InterPro" id="IPR018239">
    <property type="entry name" value="DNA_ligase_AS"/>
</dbReference>
<dbReference type="InterPro" id="IPR033136">
    <property type="entry name" value="DNA_ligase_CS"/>
</dbReference>
<dbReference type="InterPro" id="IPR013839">
    <property type="entry name" value="DNAligase_adenylation"/>
</dbReference>
<dbReference type="InterPro" id="IPR013840">
    <property type="entry name" value="DNAligase_N"/>
</dbReference>
<dbReference type="InterPro" id="IPR003583">
    <property type="entry name" value="Hlx-hairpin-Hlx_DNA-bd_motif"/>
</dbReference>
<dbReference type="InterPro" id="IPR012340">
    <property type="entry name" value="NA-bd_OB-fold"/>
</dbReference>
<dbReference type="InterPro" id="IPR004150">
    <property type="entry name" value="NAD_DNA_ligase_OB"/>
</dbReference>
<dbReference type="InterPro" id="IPR010994">
    <property type="entry name" value="RuvA_2-like"/>
</dbReference>
<dbReference type="InterPro" id="IPR004149">
    <property type="entry name" value="Znf_DNAligase_C4"/>
</dbReference>
<dbReference type="NCBIfam" id="TIGR00575">
    <property type="entry name" value="dnlj"/>
    <property type="match status" value="1"/>
</dbReference>
<dbReference type="NCBIfam" id="NF005932">
    <property type="entry name" value="PRK07956.1"/>
    <property type="match status" value="1"/>
</dbReference>
<dbReference type="PANTHER" id="PTHR23389">
    <property type="entry name" value="CHROMOSOME TRANSMISSION FIDELITY FACTOR 18"/>
    <property type="match status" value="1"/>
</dbReference>
<dbReference type="PANTHER" id="PTHR23389:SF9">
    <property type="entry name" value="DNA LIGASE"/>
    <property type="match status" value="1"/>
</dbReference>
<dbReference type="Pfam" id="PF00533">
    <property type="entry name" value="BRCT"/>
    <property type="match status" value="1"/>
</dbReference>
<dbReference type="Pfam" id="PF01653">
    <property type="entry name" value="DNA_ligase_aden"/>
    <property type="match status" value="1"/>
</dbReference>
<dbReference type="Pfam" id="PF03120">
    <property type="entry name" value="DNA_ligase_OB"/>
    <property type="match status" value="1"/>
</dbReference>
<dbReference type="Pfam" id="PF03119">
    <property type="entry name" value="DNA_ligase_ZBD"/>
    <property type="match status" value="1"/>
</dbReference>
<dbReference type="Pfam" id="PF12826">
    <property type="entry name" value="HHH_2"/>
    <property type="match status" value="1"/>
</dbReference>
<dbReference type="Pfam" id="PF14520">
    <property type="entry name" value="HHH_5"/>
    <property type="match status" value="1"/>
</dbReference>
<dbReference type="Pfam" id="PF22745">
    <property type="entry name" value="Nlig-Ia"/>
    <property type="match status" value="1"/>
</dbReference>
<dbReference type="PIRSF" id="PIRSF001604">
    <property type="entry name" value="LigA"/>
    <property type="match status" value="1"/>
</dbReference>
<dbReference type="SMART" id="SM00292">
    <property type="entry name" value="BRCT"/>
    <property type="match status" value="1"/>
</dbReference>
<dbReference type="SMART" id="SM00278">
    <property type="entry name" value="HhH1"/>
    <property type="match status" value="3"/>
</dbReference>
<dbReference type="SMART" id="SM00532">
    <property type="entry name" value="LIGANc"/>
    <property type="match status" value="1"/>
</dbReference>
<dbReference type="SUPFAM" id="SSF52113">
    <property type="entry name" value="BRCT domain"/>
    <property type="match status" value="1"/>
</dbReference>
<dbReference type="SUPFAM" id="SSF56091">
    <property type="entry name" value="DNA ligase/mRNA capping enzyme, catalytic domain"/>
    <property type="match status" value="1"/>
</dbReference>
<dbReference type="SUPFAM" id="SSF50249">
    <property type="entry name" value="Nucleic acid-binding proteins"/>
    <property type="match status" value="1"/>
</dbReference>
<dbReference type="SUPFAM" id="SSF47781">
    <property type="entry name" value="RuvA domain 2-like"/>
    <property type="match status" value="1"/>
</dbReference>
<dbReference type="PROSITE" id="PS50172">
    <property type="entry name" value="BRCT"/>
    <property type="match status" value="1"/>
</dbReference>
<dbReference type="PROSITE" id="PS01055">
    <property type="entry name" value="DNA_LIGASE_N1"/>
    <property type="match status" value="1"/>
</dbReference>
<dbReference type="PROSITE" id="PS01056">
    <property type="entry name" value="DNA_LIGASE_N2"/>
    <property type="match status" value="1"/>
</dbReference>
<feature type="chain" id="PRO_0000380317" description="DNA ligase">
    <location>
        <begin position="1"/>
        <end position="671"/>
    </location>
</feature>
<feature type="domain" description="BRCT" evidence="1">
    <location>
        <begin position="591"/>
        <end position="671"/>
    </location>
</feature>
<feature type="active site" description="N6-AMP-lysine intermediate" evidence="1">
    <location>
        <position position="116"/>
    </location>
</feature>
<feature type="binding site" evidence="1">
    <location>
        <begin position="34"/>
        <end position="38"/>
    </location>
    <ligand>
        <name>NAD(+)</name>
        <dbReference type="ChEBI" id="CHEBI:57540"/>
    </ligand>
</feature>
<feature type="binding site" evidence="1">
    <location>
        <begin position="83"/>
        <end position="84"/>
    </location>
    <ligand>
        <name>NAD(+)</name>
        <dbReference type="ChEBI" id="CHEBI:57540"/>
    </ligand>
</feature>
<feature type="binding site" evidence="1">
    <location>
        <position position="114"/>
    </location>
    <ligand>
        <name>NAD(+)</name>
        <dbReference type="ChEBI" id="CHEBI:57540"/>
    </ligand>
</feature>
<feature type="binding site" evidence="1">
    <location>
        <position position="137"/>
    </location>
    <ligand>
        <name>NAD(+)</name>
        <dbReference type="ChEBI" id="CHEBI:57540"/>
    </ligand>
</feature>
<feature type="binding site" evidence="1">
    <location>
        <position position="171"/>
    </location>
    <ligand>
        <name>NAD(+)</name>
        <dbReference type="ChEBI" id="CHEBI:57540"/>
    </ligand>
</feature>
<feature type="binding site" evidence="1">
    <location>
        <position position="287"/>
    </location>
    <ligand>
        <name>NAD(+)</name>
        <dbReference type="ChEBI" id="CHEBI:57540"/>
    </ligand>
</feature>
<feature type="binding site" evidence="1">
    <location>
        <position position="311"/>
    </location>
    <ligand>
        <name>NAD(+)</name>
        <dbReference type="ChEBI" id="CHEBI:57540"/>
    </ligand>
</feature>
<feature type="binding site" evidence="1">
    <location>
        <position position="405"/>
    </location>
    <ligand>
        <name>Zn(2+)</name>
        <dbReference type="ChEBI" id="CHEBI:29105"/>
    </ligand>
</feature>
<feature type="binding site" evidence="1">
    <location>
        <position position="408"/>
    </location>
    <ligand>
        <name>Zn(2+)</name>
        <dbReference type="ChEBI" id="CHEBI:29105"/>
    </ligand>
</feature>
<feature type="binding site" evidence="1">
    <location>
        <position position="423"/>
    </location>
    <ligand>
        <name>Zn(2+)</name>
        <dbReference type="ChEBI" id="CHEBI:29105"/>
    </ligand>
</feature>
<feature type="binding site" evidence="1">
    <location>
        <position position="428"/>
    </location>
    <ligand>
        <name>Zn(2+)</name>
        <dbReference type="ChEBI" id="CHEBI:29105"/>
    </ligand>
</feature>
<sequence length="671" mass="74179">MDRLTAETKIKELAKRIERHNRLYHEEDRPEISDQEYDQLMRELRELETSFPDLQSPDSPSLRVGGEPLPFFEKVVHKTPMLSLGNAFNEEDIRDFDRRVRQAVGSQAVRYVAELKIDGLAVSLHYENGLFVRGATRGDGTTGEDITQNLKTIRSIPLRLTKPLTLEVRGEAYMSKGAFEKLNKEREERGEALFANPRNSAAGSLRQLDPKIAASRQLDTFIYGIGDLQGETVESHSEGLDLLETLGFMVNQERRVFDDVDELLAFIAGWTEKRPHLPYEIDGMVIKVDSYAQQEELGFTAKSPRWAIAYKFPAEEAVTILEGIEVSVGRTGNVTPTALLKPVSLAGTTVKRASLHNEDIIREKGLLIGDHVVVKKAGDIIPEIIAVLPERRTGNEVPFAMPTHCPECGSELVRLEEEVALRCINPMCPALIREGMIHFVSRTAMNIDGLGEKVVAQLYRDGIIHSVADLYYLHQQRDALLGLERMGEKSVDNLLAAIEASKENSLERVLFGLGIRLVGAKAARVLAEHFGNIDTIMQASEEEITQIDEIGPKMAASLVNYFAQPQAQAVIERLRAAGVNMEYKGIRIESGADLPFSGKTIVLTGTLTQMSRQEAEEAIARLGGKVTGSVSKKTDLVIAGEKAGSKLEKAEKLGVAVMDEAGFLQVLESNA</sequence>
<keyword id="KW-0227">DNA damage</keyword>
<keyword id="KW-0234">DNA repair</keyword>
<keyword id="KW-0235">DNA replication</keyword>
<keyword id="KW-0436">Ligase</keyword>
<keyword id="KW-0460">Magnesium</keyword>
<keyword id="KW-0464">Manganese</keyword>
<keyword id="KW-0479">Metal-binding</keyword>
<keyword id="KW-0520">NAD</keyword>
<keyword id="KW-1185">Reference proteome</keyword>
<keyword id="KW-0862">Zinc</keyword>
<gene>
    <name evidence="1" type="primary">ligA</name>
    <name type="ordered locus">BBR47_06860</name>
</gene>
<protein>
    <recommendedName>
        <fullName evidence="1">DNA ligase</fullName>
        <ecNumber evidence="1">6.5.1.2</ecNumber>
    </recommendedName>
    <alternativeName>
        <fullName evidence="1">Polydeoxyribonucleotide synthase [NAD(+)]</fullName>
    </alternativeName>
</protein>